<comment type="function">
    <text evidence="1">May play a role in DNA repair. It seems to be involved in an RecBC-independent recombinational process of DNA repair. It may act with RecF and RecO.</text>
</comment>
<comment type="similarity">
    <text evidence="1">Belongs to the RecR family.</text>
</comment>
<proteinExistence type="inferred from homology"/>
<reference key="1">
    <citation type="submission" date="2006-10" db="EMBL/GenBank/DDBJ databases">
        <title>Complete sequence of Syntrophobacter fumaroxidans MPOB.</title>
        <authorList>
            <consortium name="US DOE Joint Genome Institute"/>
            <person name="Copeland A."/>
            <person name="Lucas S."/>
            <person name="Lapidus A."/>
            <person name="Barry K."/>
            <person name="Detter J.C."/>
            <person name="Glavina del Rio T."/>
            <person name="Hammon N."/>
            <person name="Israni S."/>
            <person name="Pitluck S."/>
            <person name="Goltsman E.G."/>
            <person name="Martinez M."/>
            <person name="Schmutz J."/>
            <person name="Larimer F."/>
            <person name="Land M."/>
            <person name="Hauser L."/>
            <person name="Kyrpides N."/>
            <person name="Kim E."/>
            <person name="Boone D.R."/>
            <person name="Brockman F."/>
            <person name="Culley D."/>
            <person name="Ferry J."/>
            <person name="Gunsalus R."/>
            <person name="McInerney M.J."/>
            <person name="Morrison M."/>
            <person name="Plugge C."/>
            <person name="Rohlin L."/>
            <person name="Scholten J."/>
            <person name="Sieber J."/>
            <person name="Stams A.J.M."/>
            <person name="Worm P."/>
            <person name="Henstra A.M."/>
            <person name="Richardson P."/>
        </authorList>
    </citation>
    <scope>NUCLEOTIDE SEQUENCE [LARGE SCALE GENOMIC DNA]</scope>
    <source>
        <strain>DSM 10017 / MPOB</strain>
    </source>
</reference>
<feature type="chain" id="PRO_0000322965" description="Recombination protein RecR">
    <location>
        <begin position="1"/>
        <end position="201"/>
    </location>
</feature>
<feature type="domain" description="Toprim" evidence="1">
    <location>
        <begin position="83"/>
        <end position="178"/>
    </location>
</feature>
<feature type="zinc finger region" description="C4-type" evidence="1">
    <location>
        <begin position="60"/>
        <end position="75"/>
    </location>
</feature>
<evidence type="ECO:0000255" key="1">
    <source>
        <dbReference type="HAMAP-Rule" id="MF_00017"/>
    </source>
</evidence>
<name>RECR_SYNFM</name>
<protein>
    <recommendedName>
        <fullName evidence="1">Recombination protein RecR</fullName>
    </recommendedName>
</protein>
<sequence>MVSSGYPPIMNDLIRRLSKLPGLGEKSATRIAMHLLKMSRTDAESLADAIRELRSRIRTCSRCFHFTDAEECSICADPARDTGEICVVETTADLLAIEQSGAYRGRYHVLQGVLAPLDAVGPDDLRIRELLERIDREGAREVIIATNPSSEGEATAHYLLKLLKDRNVRVSRIAYGIPMGGDLKYTDRFTLERALKGRQAF</sequence>
<keyword id="KW-0227">DNA damage</keyword>
<keyword id="KW-0233">DNA recombination</keyword>
<keyword id="KW-0234">DNA repair</keyword>
<keyword id="KW-0479">Metal-binding</keyword>
<keyword id="KW-1185">Reference proteome</keyword>
<keyword id="KW-0862">Zinc</keyword>
<keyword id="KW-0863">Zinc-finger</keyword>
<accession>A0LM17</accession>
<gene>
    <name evidence="1" type="primary">recR</name>
    <name type="ordered locus">Sfum_2791</name>
</gene>
<organism>
    <name type="scientific">Syntrophobacter fumaroxidans (strain DSM 10017 / MPOB)</name>
    <dbReference type="NCBI Taxonomy" id="335543"/>
    <lineage>
        <taxon>Bacteria</taxon>
        <taxon>Pseudomonadati</taxon>
        <taxon>Thermodesulfobacteriota</taxon>
        <taxon>Syntrophobacteria</taxon>
        <taxon>Syntrophobacterales</taxon>
        <taxon>Syntrophobacteraceae</taxon>
        <taxon>Syntrophobacter</taxon>
    </lineage>
</organism>
<dbReference type="EMBL" id="CP000478">
    <property type="protein sequence ID" value="ABK18469.1"/>
    <property type="molecule type" value="Genomic_DNA"/>
</dbReference>
<dbReference type="RefSeq" id="WP_011699636.1">
    <property type="nucleotide sequence ID" value="NC_008554.1"/>
</dbReference>
<dbReference type="SMR" id="A0LM17"/>
<dbReference type="FunCoup" id="A0LM17">
    <property type="interactions" value="254"/>
</dbReference>
<dbReference type="STRING" id="335543.Sfum_2791"/>
<dbReference type="KEGG" id="sfu:Sfum_2791"/>
<dbReference type="eggNOG" id="COG0353">
    <property type="taxonomic scope" value="Bacteria"/>
</dbReference>
<dbReference type="HOGENOM" id="CLU_060739_1_0_7"/>
<dbReference type="InParanoid" id="A0LM17"/>
<dbReference type="OrthoDB" id="9802672at2"/>
<dbReference type="Proteomes" id="UP000001784">
    <property type="component" value="Chromosome"/>
</dbReference>
<dbReference type="GO" id="GO:0003677">
    <property type="term" value="F:DNA binding"/>
    <property type="evidence" value="ECO:0007669"/>
    <property type="project" value="UniProtKB-UniRule"/>
</dbReference>
<dbReference type="GO" id="GO:0008270">
    <property type="term" value="F:zinc ion binding"/>
    <property type="evidence" value="ECO:0007669"/>
    <property type="project" value="UniProtKB-KW"/>
</dbReference>
<dbReference type="GO" id="GO:0006310">
    <property type="term" value="P:DNA recombination"/>
    <property type="evidence" value="ECO:0007669"/>
    <property type="project" value="UniProtKB-UniRule"/>
</dbReference>
<dbReference type="GO" id="GO:0006281">
    <property type="term" value="P:DNA repair"/>
    <property type="evidence" value="ECO:0007669"/>
    <property type="project" value="UniProtKB-UniRule"/>
</dbReference>
<dbReference type="CDD" id="cd01025">
    <property type="entry name" value="TOPRIM_recR"/>
    <property type="match status" value="1"/>
</dbReference>
<dbReference type="Gene3D" id="3.30.60.80">
    <property type="match status" value="1"/>
</dbReference>
<dbReference type="Gene3D" id="3.40.1360.10">
    <property type="match status" value="1"/>
</dbReference>
<dbReference type="Gene3D" id="6.10.250.240">
    <property type="match status" value="1"/>
</dbReference>
<dbReference type="Gene3D" id="1.10.8.420">
    <property type="entry name" value="RecR Domain 1"/>
    <property type="match status" value="1"/>
</dbReference>
<dbReference type="HAMAP" id="MF_00017">
    <property type="entry name" value="RecR"/>
    <property type="match status" value="1"/>
</dbReference>
<dbReference type="InterPro" id="IPR000093">
    <property type="entry name" value="DNA_Rcmb_RecR"/>
</dbReference>
<dbReference type="InterPro" id="IPR023627">
    <property type="entry name" value="Rcmb_RecR"/>
</dbReference>
<dbReference type="InterPro" id="IPR015967">
    <property type="entry name" value="Rcmb_RecR_Znf"/>
</dbReference>
<dbReference type="InterPro" id="IPR006171">
    <property type="entry name" value="TOPRIM_dom"/>
</dbReference>
<dbReference type="InterPro" id="IPR034137">
    <property type="entry name" value="TOPRIM_RecR"/>
</dbReference>
<dbReference type="NCBIfam" id="TIGR00615">
    <property type="entry name" value="recR"/>
    <property type="match status" value="1"/>
</dbReference>
<dbReference type="PANTHER" id="PTHR30446">
    <property type="entry name" value="RECOMBINATION PROTEIN RECR"/>
    <property type="match status" value="1"/>
</dbReference>
<dbReference type="PANTHER" id="PTHR30446:SF0">
    <property type="entry name" value="RECOMBINATION PROTEIN RECR"/>
    <property type="match status" value="1"/>
</dbReference>
<dbReference type="Pfam" id="PF21175">
    <property type="entry name" value="RecR_C"/>
    <property type="match status" value="1"/>
</dbReference>
<dbReference type="Pfam" id="PF21176">
    <property type="entry name" value="RecR_HhH"/>
    <property type="match status" value="1"/>
</dbReference>
<dbReference type="Pfam" id="PF02132">
    <property type="entry name" value="RecR_ZnF"/>
    <property type="match status" value="1"/>
</dbReference>
<dbReference type="Pfam" id="PF13662">
    <property type="entry name" value="Toprim_4"/>
    <property type="match status" value="1"/>
</dbReference>
<dbReference type="SMART" id="SM00493">
    <property type="entry name" value="TOPRIM"/>
    <property type="match status" value="1"/>
</dbReference>
<dbReference type="SUPFAM" id="SSF111304">
    <property type="entry name" value="Recombination protein RecR"/>
    <property type="match status" value="1"/>
</dbReference>
<dbReference type="PROSITE" id="PS01300">
    <property type="entry name" value="RECR"/>
    <property type="match status" value="1"/>
</dbReference>
<dbReference type="PROSITE" id="PS50880">
    <property type="entry name" value="TOPRIM"/>
    <property type="match status" value="1"/>
</dbReference>